<evidence type="ECO:0000255" key="1">
    <source>
        <dbReference type="HAMAP-Rule" id="MF_00337"/>
    </source>
</evidence>
<name>EX7S_PSEP7</name>
<gene>
    <name evidence="1" type="primary">xseB</name>
    <name type="ordered locus">PSPA7_1059</name>
</gene>
<organism>
    <name type="scientific">Pseudomonas paraeruginosa (strain DSM 24068 / PA7)</name>
    <name type="common">Pseudomonas aeruginosa (strain PA7)</name>
    <dbReference type="NCBI Taxonomy" id="381754"/>
    <lineage>
        <taxon>Bacteria</taxon>
        <taxon>Pseudomonadati</taxon>
        <taxon>Pseudomonadota</taxon>
        <taxon>Gammaproteobacteria</taxon>
        <taxon>Pseudomonadales</taxon>
        <taxon>Pseudomonadaceae</taxon>
        <taxon>Pseudomonas</taxon>
        <taxon>Pseudomonas paraeruginosa</taxon>
    </lineage>
</organism>
<dbReference type="EC" id="3.1.11.6" evidence="1"/>
<dbReference type="EMBL" id="CP000744">
    <property type="protein sequence ID" value="ABR81079.1"/>
    <property type="molecule type" value="Genomic_DNA"/>
</dbReference>
<dbReference type="RefSeq" id="WP_003155204.1">
    <property type="nucleotide sequence ID" value="NC_009656.1"/>
</dbReference>
<dbReference type="SMR" id="A6V060"/>
<dbReference type="KEGG" id="pap:PSPA7_1059"/>
<dbReference type="HOGENOM" id="CLU_145918_3_3_6"/>
<dbReference type="Proteomes" id="UP000001582">
    <property type="component" value="Chromosome"/>
</dbReference>
<dbReference type="GO" id="GO:0005829">
    <property type="term" value="C:cytosol"/>
    <property type="evidence" value="ECO:0007669"/>
    <property type="project" value="TreeGrafter"/>
</dbReference>
<dbReference type="GO" id="GO:0009318">
    <property type="term" value="C:exodeoxyribonuclease VII complex"/>
    <property type="evidence" value="ECO:0007669"/>
    <property type="project" value="InterPro"/>
</dbReference>
<dbReference type="GO" id="GO:0008855">
    <property type="term" value="F:exodeoxyribonuclease VII activity"/>
    <property type="evidence" value="ECO:0007669"/>
    <property type="project" value="UniProtKB-UniRule"/>
</dbReference>
<dbReference type="GO" id="GO:0006308">
    <property type="term" value="P:DNA catabolic process"/>
    <property type="evidence" value="ECO:0007669"/>
    <property type="project" value="UniProtKB-UniRule"/>
</dbReference>
<dbReference type="Gene3D" id="1.10.287.1040">
    <property type="entry name" value="Exonuclease VII, small subunit"/>
    <property type="match status" value="1"/>
</dbReference>
<dbReference type="HAMAP" id="MF_00337">
    <property type="entry name" value="Exonuc_7_S"/>
    <property type="match status" value="1"/>
</dbReference>
<dbReference type="InterPro" id="IPR003761">
    <property type="entry name" value="Exonuc_VII_S"/>
</dbReference>
<dbReference type="InterPro" id="IPR037004">
    <property type="entry name" value="Exonuc_VII_ssu_sf"/>
</dbReference>
<dbReference type="NCBIfam" id="NF002140">
    <property type="entry name" value="PRK00977.1-4"/>
    <property type="match status" value="1"/>
</dbReference>
<dbReference type="NCBIfam" id="TIGR01280">
    <property type="entry name" value="xseB"/>
    <property type="match status" value="1"/>
</dbReference>
<dbReference type="PANTHER" id="PTHR34137">
    <property type="entry name" value="EXODEOXYRIBONUCLEASE 7 SMALL SUBUNIT"/>
    <property type="match status" value="1"/>
</dbReference>
<dbReference type="PANTHER" id="PTHR34137:SF1">
    <property type="entry name" value="EXODEOXYRIBONUCLEASE 7 SMALL SUBUNIT"/>
    <property type="match status" value="1"/>
</dbReference>
<dbReference type="Pfam" id="PF02609">
    <property type="entry name" value="Exonuc_VII_S"/>
    <property type="match status" value="1"/>
</dbReference>
<dbReference type="PIRSF" id="PIRSF006488">
    <property type="entry name" value="Exonuc_VII_S"/>
    <property type="match status" value="1"/>
</dbReference>
<dbReference type="SUPFAM" id="SSF116842">
    <property type="entry name" value="XseB-like"/>
    <property type="match status" value="1"/>
</dbReference>
<keyword id="KW-0963">Cytoplasm</keyword>
<keyword id="KW-0269">Exonuclease</keyword>
<keyword id="KW-0378">Hydrolase</keyword>
<keyword id="KW-0540">Nuclease</keyword>
<comment type="function">
    <text evidence="1">Bidirectionally degrades single-stranded DNA into large acid-insoluble oligonucleotides, which are then degraded further into small acid-soluble oligonucleotides.</text>
</comment>
<comment type="catalytic activity">
    <reaction evidence="1">
        <text>Exonucleolytic cleavage in either 5'- to 3'- or 3'- to 5'-direction to yield nucleoside 5'-phosphates.</text>
        <dbReference type="EC" id="3.1.11.6"/>
    </reaction>
</comment>
<comment type="subunit">
    <text evidence="1">Heterooligomer composed of large and small subunits.</text>
</comment>
<comment type="subcellular location">
    <subcellularLocation>
        <location evidence="1">Cytoplasm</location>
    </subcellularLocation>
</comment>
<comment type="similarity">
    <text evidence="1">Belongs to the XseB family.</text>
</comment>
<protein>
    <recommendedName>
        <fullName evidence="1">Exodeoxyribonuclease 7 small subunit</fullName>
        <ecNumber evidence="1">3.1.11.6</ecNumber>
    </recommendedName>
    <alternativeName>
        <fullName evidence="1">Exodeoxyribonuclease VII small subunit</fullName>
        <shortName evidence="1">Exonuclease VII small subunit</shortName>
    </alternativeName>
</protein>
<feature type="chain" id="PRO_1000019586" description="Exodeoxyribonuclease 7 small subunit">
    <location>
        <begin position="1"/>
        <end position="80"/>
    </location>
</feature>
<accession>A6V060</accession>
<proteinExistence type="inferred from homology"/>
<reference key="1">
    <citation type="submission" date="2007-06" db="EMBL/GenBank/DDBJ databases">
        <authorList>
            <person name="Dodson R.J."/>
            <person name="Harkins D."/>
            <person name="Paulsen I.T."/>
        </authorList>
    </citation>
    <scope>NUCLEOTIDE SEQUENCE [LARGE SCALE GENOMIC DNA]</scope>
    <source>
        <strain>DSM 24068 / PA7</strain>
    </source>
</reference>
<sequence length="80" mass="8973">MARKKTLDFEQSLTELQTLVERLESGELSLEESLGAFEQGIRLTRECQASLSQAEQKVQILLERDGELSEAPFDTEGDEA</sequence>